<gene>
    <name type="primary">MEG3</name>
    <name evidence="4" type="ORF">GRMZM2G344323</name>
</gene>
<comment type="tissue specificity">
    <text evidence="3">Expressed in endosperm, anther and pollen.</text>
</comment>
<comment type="similarity">
    <text evidence="4">Belongs to the MEG family.</text>
</comment>
<keyword id="KW-1015">Disulfide bond</keyword>
<keyword id="KW-1185">Reference proteome</keyword>
<keyword id="KW-0732">Signal</keyword>
<dbReference type="EMBL" id="AY536123">
    <property type="protein sequence ID" value="AAT09812.1"/>
    <property type="molecule type" value="mRNA"/>
</dbReference>
<dbReference type="EMBL" id="AC207116">
    <property type="status" value="NOT_ANNOTATED_CDS"/>
    <property type="molecule type" value="Genomic_DNA"/>
</dbReference>
<dbReference type="RefSeq" id="NP_001106006.1">
    <property type="nucleotide sequence ID" value="NM_001112536.1"/>
</dbReference>
<dbReference type="SMR" id="Q6JB13"/>
<dbReference type="STRING" id="4577.Q6JB13"/>
<dbReference type="PaxDb" id="4577-GRMZM2G344323_P01"/>
<dbReference type="HOGENOM" id="CLU_2545988_0_0_1"/>
<dbReference type="InParanoid" id="Q6JB13"/>
<dbReference type="Proteomes" id="UP000007305">
    <property type="component" value="Unplaced"/>
</dbReference>
<dbReference type="ExpressionAtlas" id="Q6JB13">
    <property type="expression patterns" value="baseline and differential"/>
</dbReference>
<dbReference type="InterPro" id="IPR056205">
    <property type="entry name" value="Meg"/>
</dbReference>
<dbReference type="Pfam" id="PF24153">
    <property type="entry name" value="Meg"/>
    <property type="match status" value="1"/>
</dbReference>
<proteinExistence type="evidence at transcript level"/>
<feature type="signal peptide" evidence="2">
    <location>
        <begin position="1"/>
        <end position="22"/>
    </location>
</feature>
<feature type="chain" id="PRO_0000430075" description="Protein MATERNALLY EXPRESSED GENE 3">
    <location>
        <begin position="23"/>
        <end position="83"/>
    </location>
</feature>
<feature type="disulfide bond" evidence="1">
    <location>
        <begin position="60"/>
        <end position="82"/>
    </location>
</feature>
<protein>
    <recommendedName>
        <fullName>Protein MATERNALLY EXPRESSED GENE 3</fullName>
    </recommendedName>
</protein>
<reference key="1">
    <citation type="journal article" date="2004" name="Plant Cell">
        <title>maternally expressed gene1 is a novel maize endosperm transfer cell-specific gene with a maternal parent-of-origin pattern of expression.</title>
        <authorList>
            <person name="Gutierrez-Marcos J.F."/>
            <person name="Costa L.M."/>
            <person name="Biderre-Petit C."/>
            <person name="Khbaya B."/>
            <person name="O'Sullivan D.M."/>
            <person name="Wormald M."/>
            <person name="Perez P."/>
            <person name="Dickinson H.G."/>
        </authorList>
    </citation>
    <scope>NUCLEOTIDE SEQUENCE [MRNA]</scope>
    <scope>TISSUE SPECIFICITY</scope>
    <scope>GENE FAMILY</scope>
    <scope>NOMENCLATURE</scope>
</reference>
<reference key="2">
    <citation type="journal article" date="2009" name="Science">
        <title>The B73 maize genome: complexity, diversity, and dynamics.</title>
        <authorList>
            <person name="Schnable P.S."/>
            <person name="Ware D."/>
            <person name="Fulton R.S."/>
            <person name="Stein J.C."/>
            <person name="Wei F."/>
            <person name="Pasternak S."/>
            <person name="Liang C."/>
            <person name="Zhang J."/>
            <person name="Fulton L."/>
            <person name="Graves T.A."/>
            <person name="Minx P."/>
            <person name="Reily A.D."/>
            <person name="Courtney L."/>
            <person name="Kruchowski S.S."/>
            <person name="Tomlinson C."/>
            <person name="Strong C."/>
            <person name="Delehaunty K."/>
            <person name="Fronick C."/>
            <person name="Courtney B."/>
            <person name="Rock S.M."/>
            <person name="Belter E."/>
            <person name="Du F."/>
            <person name="Kim K."/>
            <person name="Abbott R.M."/>
            <person name="Cotton M."/>
            <person name="Levy A."/>
            <person name="Marchetto P."/>
            <person name="Ochoa K."/>
            <person name="Jackson S.M."/>
            <person name="Gillam B."/>
            <person name="Chen W."/>
            <person name="Yan L."/>
            <person name="Higginbotham J."/>
            <person name="Cardenas M."/>
            <person name="Waligorski J."/>
            <person name="Applebaum E."/>
            <person name="Phelps L."/>
            <person name="Falcone J."/>
            <person name="Kanchi K."/>
            <person name="Thane T."/>
            <person name="Scimone A."/>
            <person name="Thane N."/>
            <person name="Henke J."/>
            <person name="Wang T."/>
            <person name="Ruppert J."/>
            <person name="Shah N."/>
            <person name="Rotter K."/>
            <person name="Hodges J."/>
            <person name="Ingenthron E."/>
            <person name="Cordes M."/>
            <person name="Kohlberg S."/>
            <person name="Sgro J."/>
            <person name="Delgado B."/>
            <person name="Mead K."/>
            <person name="Chinwalla A."/>
            <person name="Leonard S."/>
            <person name="Crouse K."/>
            <person name="Collura K."/>
            <person name="Kudrna D."/>
            <person name="Currie J."/>
            <person name="He R."/>
            <person name="Angelova A."/>
            <person name="Rajasekar S."/>
            <person name="Mueller T."/>
            <person name="Lomeli R."/>
            <person name="Scara G."/>
            <person name="Ko A."/>
            <person name="Delaney K."/>
            <person name="Wissotski M."/>
            <person name="Lopez G."/>
            <person name="Campos D."/>
            <person name="Braidotti M."/>
            <person name="Ashley E."/>
            <person name="Golser W."/>
            <person name="Kim H."/>
            <person name="Lee S."/>
            <person name="Lin J."/>
            <person name="Dujmic Z."/>
            <person name="Kim W."/>
            <person name="Talag J."/>
            <person name="Zuccolo A."/>
            <person name="Fan C."/>
            <person name="Sebastian A."/>
            <person name="Kramer M."/>
            <person name="Spiegel L."/>
            <person name="Nascimento L."/>
            <person name="Zutavern T."/>
            <person name="Miller B."/>
            <person name="Ambroise C."/>
            <person name="Muller S."/>
            <person name="Spooner W."/>
            <person name="Narechania A."/>
            <person name="Ren L."/>
            <person name="Wei S."/>
            <person name="Kumari S."/>
            <person name="Faga B."/>
            <person name="Levy M.J."/>
            <person name="McMahan L."/>
            <person name="Van Buren P."/>
            <person name="Vaughn M.W."/>
            <person name="Ying K."/>
            <person name="Yeh C.-T."/>
            <person name="Emrich S.J."/>
            <person name="Jia Y."/>
            <person name="Kalyanaraman A."/>
            <person name="Hsia A.-P."/>
            <person name="Barbazuk W.B."/>
            <person name="Baucom R.S."/>
            <person name="Brutnell T.P."/>
            <person name="Carpita N.C."/>
            <person name="Chaparro C."/>
            <person name="Chia J.-M."/>
            <person name="Deragon J.-M."/>
            <person name="Estill J.C."/>
            <person name="Fu Y."/>
            <person name="Jeddeloh J.A."/>
            <person name="Han Y."/>
            <person name="Lee H."/>
            <person name="Li P."/>
            <person name="Lisch D.R."/>
            <person name="Liu S."/>
            <person name="Liu Z."/>
            <person name="Nagel D.H."/>
            <person name="McCann M.C."/>
            <person name="SanMiguel P."/>
            <person name="Myers A.M."/>
            <person name="Nettleton D."/>
            <person name="Nguyen J."/>
            <person name="Penning B.W."/>
            <person name="Ponnala L."/>
            <person name="Schneider K.L."/>
            <person name="Schwartz D.C."/>
            <person name="Sharma A."/>
            <person name="Soderlund C."/>
            <person name="Springer N.M."/>
            <person name="Sun Q."/>
            <person name="Wang H."/>
            <person name="Waterman M."/>
            <person name="Westerman R."/>
            <person name="Wolfgruber T.K."/>
            <person name="Yang L."/>
            <person name="Yu Y."/>
            <person name="Zhang L."/>
            <person name="Zhou S."/>
            <person name="Zhu Q."/>
            <person name="Bennetzen J.L."/>
            <person name="Dawe R.K."/>
            <person name="Jiang J."/>
            <person name="Jiang N."/>
            <person name="Presting G.G."/>
            <person name="Wessler S.R."/>
            <person name="Aluru S."/>
            <person name="Martienssen R.A."/>
            <person name="Clifton S.W."/>
            <person name="McCombie W.R."/>
            <person name="Wing R.A."/>
            <person name="Wilson R.K."/>
        </authorList>
    </citation>
    <scope>NUCLEOTIDE SEQUENCE [LARGE SCALE GENOMIC DNA]</scope>
    <source>
        <strain>cv. B73</strain>
    </source>
</reference>
<accession>Q6JB13</accession>
<sequence>MQWLAFVAPRWRCVCDQELSAQTGHVTDDVGVSTPAKEGIMQGNGARCDVGFPPCKDNKCYCCIGGRTHARYSTLAECSHACF</sequence>
<organism>
    <name type="scientific">Zea mays</name>
    <name type="common">Maize</name>
    <dbReference type="NCBI Taxonomy" id="4577"/>
    <lineage>
        <taxon>Eukaryota</taxon>
        <taxon>Viridiplantae</taxon>
        <taxon>Streptophyta</taxon>
        <taxon>Embryophyta</taxon>
        <taxon>Tracheophyta</taxon>
        <taxon>Spermatophyta</taxon>
        <taxon>Magnoliopsida</taxon>
        <taxon>Liliopsida</taxon>
        <taxon>Poales</taxon>
        <taxon>Poaceae</taxon>
        <taxon>PACMAD clade</taxon>
        <taxon>Panicoideae</taxon>
        <taxon>Andropogonodae</taxon>
        <taxon>Andropogoneae</taxon>
        <taxon>Tripsacinae</taxon>
        <taxon>Zea</taxon>
    </lineage>
</organism>
<evidence type="ECO:0000250" key="1"/>
<evidence type="ECO:0000255" key="2"/>
<evidence type="ECO:0000269" key="3">
    <source>
    </source>
</evidence>
<evidence type="ECO:0000305" key="4"/>
<name>MEG3_MAIZE</name>